<reference key="1">
    <citation type="journal article" date="2000" name="Nucleic Acids Res.">
        <title>Complete genome sequence of the alkaliphilic bacterium Bacillus halodurans and genomic sequence comparison with Bacillus subtilis.</title>
        <authorList>
            <person name="Takami H."/>
            <person name="Nakasone K."/>
            <person name="Takaki Y."/>
            <person name="Maeno G."/>
            <person name="Sasaki R."/>
            <person name="Masui N."/>
            <person name="Fuji F."/>
            <person name="Hirama C."/>
            <person name="Nakamura Y."/>
            <person name="Ogasawara N."/>
            <person name="Kuhara S."/>
            <person name="Horikoshi K."/>
        </authorList>
    </citation>
    <scope>NUCLEOTIDE SEQUENCE [LARGE SCALE GENOMIC DNA]</scope>
    <source>
        <strain>ATCC BAA-125 / DSM 18197 / FERM 7344 / JCM 9153 / C-125</strain>
    </source>
</reference>
<accession>Q9KD18</accession>
<gene>
    <name evidence="1" type="primary">ispG</name>
    <name type="synonym">gcpE</name>
    <name type="ordered locus">BH1401</name>
</gene>
<dbReference type="EC" id="1.17.7.3" evidence="1"/>
<dbReference type="EMBL" id="BA000004">
    <property type="protein sequence ID" value="BAB05120.1"/>
    <property type="molecule type" value="Genomic_DNA"/>
</dbReference>
<dbReference type="PIR" id="A83825">
    <property type="entry name" value="A83825"/>
</dbReference>
<dbReference type="RefSeq" id="WP_010897566.1">
    <property type="nucleotide sequence ID" value="NC_002570.2"/>
</dbReference>
<dbReference type="SMR" id="Q9KD18"/>
<dbReference type="STRING" id="272558.gene:10727295"/>
<dbReference type="GeneID" id="87597025"/>
<dbReference type="KEGG" id="bha:BH1401"/>
<dbReference type="eggNOG" id="COG0821">
    <property type="taxonomic scope" value="Bacteria"/>
</dbReference>
<dbReference type="HOGENOM" id="CLU_042258_0_0_9"/>
<dbReference type="OrthoDB" id="9803214at2"/>
<dbReference type="UniPathway" id="UPA00056">
    <property type="reaction ID" value="UER00096"/>
</dbReference>
<dbReference type="Proteomes" id="UP000001258">
    <property type="component" value="Chromosome"/>
</dbReference>
<dbReference type="GO" id="GO:0051539">
    <property type="term" value="F:4 iron, 4 sulfur cluster binding"/>
    <property type="evidence" value="ECO:0007669"/>
    <property type="project" value="UniProtKB-UniRule"/>
</dbReference>
<dbReference type="GO" id="GO:0046429">
    <property type="term" value="F:4-hydroxy-3-methylbut-2-en-1-yl diphosphate synthase activity (ferredoxin)"/>
    <property type="evidence" value="ECO:0007669"/>
    <property type="project" value="UniProtKB-UniRule"/>
</dbReference>
<dbReference type="GO" id="GO:0141197">
    <property type="term" value="F:4-hydroxy-3-methylbut-2-enyl-diphosphate synthase activity (flavodoxin)"/>
    <property type="evidence" value="ECO:0007669"/>
    <property type="project" value="UniProtKB-EC"/>
</dbReference>
<dbReference type="GO" id="GO:0005506">
    <property type="term" value="F:iron ion binding"/>
    <property type="evidence" value="ECO:0007669"/>
    <property type="project" value="InterPro"/>
</dbReference>
<dbReference type="GO" id="GO:0019288">
    <property type="term" value="P:isopentenyl diphosphate biosynthetic process, methylerythritol 4-phosphate pathway"/>
    <property type="evidence" value="ECO:0007669"/>
    <property type="project" value="UniProtKB-UniRule"/>
</dbReference>
<dbReference type="GO" id="GO:0016114">
    <property type="term" value="P:terpenoid biosynthetic process"/>
    <property type="evidence" value="ECO:0007669"/>
    <property type="project" value="InterPro"/>
</dbReference>
<dbReference type="FunFam" id="3.20.20.20:FF:000001">
    <property type="entry name" value="4-hydroxy-3-methylbut-2-en-1-yl diphosphate synthase (flavodoxin)"/>
    <property type="match status" value="1"/>
</dbReference>
<dbReference type="FunFam" id="3.30.413.10:FF:000005">
    <property type="entry name" value="4-hydroxy-3-methylbut-2-en-1-yl diphosphate synthase (flavodoxin)"/>
    <property type="match status" value="1"/>
</dbReference>
<dbReference type="Gene3D" id="3.20.20.20">
    <property type="entry name" value="Dihydropteroate synthase-like"/>
    <property type="match status" value="1"/>
</dbReference>
<dbReference type="Gene3D" id="3.30.413.10">
    <property type="entry name" value="Sulfite Reductase Hemoprotein, domain 1"/>
    <property type="match status" value="1"/>
</dbReference>
<dbReference type="HAMAP" id="MF_00159">
    <property type="entry name" value="IspG"/>
    <property type="match status" value="1"/>
</dbReference>
<dbReference type="InterPro" id="IPR011005">
    <property type="entry name" value="Dihydropteroate_synth-like_sf"/>
</dbReference>
<dbReference type="InterPro" id="IPR016425">
    <property type="entry name" value="IspG_bac"/>
</dbReference>
<dbReference type="InterPro" id="IPR004588">
    <property type="entry name" value="IspG_bac-typ"/>
</dbReference>
<dbReference type="InterPro" id="IPR045854">
    <property type="entry name" value="NO2/SO3_Rdtase_4Fe4S_sf"/>
</dbReference>
<dbReference type="NCBIfam" id="TIGR00612">
    <property type="entry name" value="ispG_gcpE"/>
    <property type="match status" value="1"/>
</dbReference>
<dbReference type="NCBIfam" id="NF001540">
    <property type="entry name" value="PRK00366.1"/>
    <property type="match status" value="1"/>
</dbReference>
<dbReference type="PANTHER" id="PTHR30454">
    <property type="entry name" value="4-HYDROXY-3-METHYLBUT-2-EN-1-YL DIPHOSPHATE SYNTHASE"/>
    <property type="match status" value="1"/>
</dbReference>
<dbReference type="PANTHER" id="PTHR30454:SF0">
    <property type="entry name" value="4-HYDROXY-3-METHYLBUT-2-EN-1-YL DIPHOSPHATE SYNTHASE (FERREDOXIN), CHLOROPLASTIC"/>
    <property type="match status" value="1"/>
</dbReference>
<dbReference type="Pfam" id="PF04551">
    <property type="entry name" value="GcpE"/>
    <property type="match status" value="1"/>
</dbReference>
<dbReference type="PIRSF" id="PIRSF004640">
    <property type="entry name" value="IspG"/>
    <property type="match status" value="1"/>
</dbReference>
<dbReference type="SUPFAM" id="SSF51717">
    <property type="entry name" value="Dihydropteroate synthetase-like"/>
    <property type="match status" value="1"/>
</dbReference>
<dbReference type="SUPFAM" id="SSF56014">
    <property type="entry name" value="Nitrite and sulphite reductase 4Fe-4S domain-like"/>
    <property type="match status" value="1"/>
</dbReference>
<sequence>MTEITHRTKTRPVKVGNLTIGGNNEVVVQSMTTTKTHDVEATVAEIKRLEEAGCQVVRVACPDMRAAEAIPAIKKQISIPLVVDIHFDYKLALKAIEGGADKIRINPGNIGKRHKVEAVVKAAKEKGIPIRIGVNAGSLEKRILDKYGYPTADGMVESALHHIKILEDLDFHDIIVSMKASDVNLAIEAYEKAAKAFDYPLHLGITESGTLFAGTVKSAAGLGAILNMGIGNTVRVSLSADPVEEVKVARELLKSFGLASNAATLISCPTCGRIEIDLISIANEMEEYISKIRAPIKVAVLGCAVNGPGEAREADIGIAGARGEGLLFRKGEIVRKVPEETMVEELKKEIDKIAEEYFAKQKELEKA</sequence>
<keyword id="KW-0004">4Fe-4S</keyword>
<keyword id="KW-0408">Iron</keyword>
<keyword id="KW-0411">Iron-sulfur</keyword>
<keyword id="KW-0414">Isoprene biosynthesis</keyword>
<keyword id="KW-0479">Metal-binding</keyword>
<keyword id="KW-0560">Oxidoreductase</keyword>
<keyword id="KW-1185">Reference proteome</keyword>
<comment type="function">
    <text evidence="1">Converts 2C-methyl-D-erythritol 2,4-cyclodiphosphate (ME-2,4cPP) into 1-hydroxy-2-methyl-2-(E)-butenyl 4-diphosphate.</text>
</comment>
<comment type="catalytic activity">
    <reaction evidence="1">
        <text>(2E)-4-hydroxy-3-methylbut-2-enyl diphosphate + oxidized [flavodoxin] + H2O + 2 H(+) = 2-C-methyl-D-erythritol 2,4-cyclic diphosphate + reduced [flavodoxin]</text>
        <dbReference type="Rhea" id="RHEA:43604"/>
        <dbReference type="Rhea" id="RHEA-COMP:10622"/>
        <dbReference type="Rhea" id="RHEA-COMP:10623"/>
        <dbReference type="ChEBI" id="CHEBI:15377"/>
        <dbReference type="ChEBI" id="CHEBI:15378"/>
        <dbReference type="ChEBI" id="CHEBI:57618"/>
        <dbReference type="ChEBI" id="CHEBI:58210"/>
        <dbReference type="ChEBI" id="CHEBI:58483"/>
        <dbReference type="ChEBI" id="CHEBI:128753"/>
        <dbReference type="EC" id="1.17.7.3"/>
    </reaction>
</comment>
<comment type="cofactor">
    <cofactor evidence="1">
        <name>[4Fe-4S] cluster</name>
        <dbReference type="ChEBI" id="CHEBI:49883"/>
    </cofactor>
    <text evidence="1">Binds 1 [4Fe-4S] cluster.</text>
</comment>
<comment type="pathway">
    <text evidence="1">Isoprenoid biosynthesis; isopentenyl diphosphate biosynthesis via DXP pathway; isopentenyl diphosphate from 1-deoxy-D-xylulose 5-phosphate: step 5/6.</text>
</comment>
<comment type="similarity">
    <text evidence="1">Belongs to the IspG family.</text>
</comment>
<feature type="chain" id="PRO_0000190533" description="4-hydroxy-3-methylbut-2-en-1-yl diphosphate synthase (flavodoxin)">
    <location>
        <begin position="1"/>
        <end position="367"/>
    </location>
</feature>
<feature type="binding site" evidence="1">
    <location>
        <position position="268"/>
    </location>
    <ligand>
        <name>[4Fe-4S] cluster</name>
        <dbReference type="ChEBI" id="CHEBI:49883"/>
    </ligand>
</feature>
<feature type="binding site" evidence="1">
    <location>
        <position position="271"/>
    </location>
    <ligand>
        <name>[4Fe-4S] cluster</name>
        <dbReference type="ChEBI" id="CHEBI:49883"/>
    </ligand>
</feature>
<feature type="binding site" evidence="1">
    <location>
        <position position="303"/>
    </location>
    <ligand>
        <name>[4Fe-4S] cluster</name>
        <dbReference type="ChEBI" id="CHEBI:49883"/>
    </ligand>
</feature>
<feature type="binding site" evidence="1">
    <location>
        <position position="310"/>
    </location>
    <ligand>
        <name>[4Fe-4S] cluster</name>
        <dbReference type="ChEBI" id="CHEBI:49883"/>
    </ligand>
</feature>
<organism>
    <name type="scientific">Halalkalibacterium halodurans (strain ATCC BAA-125 / DSM 18197 / FERM 7344 / JCM 9153 / C-125)</name>
    <name type="common">Bacillus halodurans</name>
    <dbReference type="NCBI Taxonomy" id="272558"/>
    <lineage>
        <taxon>Bacteria</taxon>
        <taxon>Bacillati</taxon>
        <taxon>Bacillota</taxon>
        <taxon>Bacilli</taxon>
        <taxon>Bacillales</taxon>
        <taxon>Bacillaceae</taxon>
        <taxon>Halalkalibacterium (ex Joshi et al. 2022)</taxon>
    </lineage>
</organism>
<evidence type="ECO:0000255" key="1">
    <source>
        <dbReference type="HAMAP-Rule" id="MF_00159"/>
    </source>
</evidence>
<proteinExistence type="inferred from homology"/>
<name>ISPG_HALH5</name>
<protein>
    <recommendedName>
        <fullName evidence="1">4-hydroxy-3-methylbut-2-en-1-yl diphosphate synthase (flavodoxin)</fullName>
        <ecNumber evidence="1">1.17.7.3</ecNumber>
    </recommendedName>
    <alternativeName>
        <fullName evidence="1">1-hydroxy-2-methyl-2-(E)-butenyl 4-diphosphate synthase</fullName>
    </alternativeName>
</protein>